<evidence type="ECO:0000250" key="1"/>
<evidence type="ECO:0000255" key="2"/>
<evidence type="ECO:0000269" key="3">
    <source>
    </source>
</evidence>
<evidence type="ECO:0000305" key="4"/>
<keyword id="KW-0007">Acetylation</keyword>
<keyword id="KW-0903">Direct protein sequencing</keyword>
<keyword id="KW-1015">Disulfide bond</keyword>
<keyword id="KW-0325">Glycoprotein</keyword>
<keyword id="KW-0597">Phosphoprotein</keyword>
<keyword id="KW-1185">Reference proteome</keyword>
<keyword id="KW-0964">Secreted</keyword>
<keyword id="KW-0732">Signal</keyword>
<reference key="1">
    <citation type="submission" date="1998-05" db="EMBL/GenBank/DDBJ databases">
        <title>Turkey ovalbumin cDNA.</title>
        <authorList>
            <person name="Roberts M.C."/>
            <person name="Butt A.T."/>
            <person name="Schenkel E.F."/>
            <person name="Wong E.A."/>
        </authorList>
    </citation>
    <scope>NUCLEOTIDE SEQUENCE [MRNA]</scope>
</reference>
<reference key="2">
    <citation type="journal article" date="1981" name="Eur. J. Biochem.">
        <title>Sequences of sixteen phosphoserine peptides from ovalbumins of eight species.</title>
        <authorList>
            <person name="Henderson J.Y."/>
            <person name="Moir A.J.G."/>
            <person name="Fothergill L.A."/>
            <person name="Fothergill J.E."/>
        </authorList>
    </citation>
    <scope>PROTEIN SEQUENCE OF 60-85 AND 339-360</scope>
    <scope>PHOSPHORYLATION AT SER-69 AND SER-345</scope>
</reference>
<dbReference type="EMBL" id="AF064546">
    <property type="protein sequence ID" value="AAC16664.1"/>
    <property type="molecule type" value="mRNA"/>
</dbReference>
<dbReference type="RefSeq" id="NP_001290119.1">
    <property type="nucleotide sequence ID" value="NM_001303190.1"/>
</dbReference>
<dbReference type="SMR" id="O73860"/>
<dbReference type="FunCoup" id="O73860">
    <property type="interactions" value="9"/>
</dbReference>
<dbReference type="Allergome" id="2115">
    <property type="allergen name" value="Mel g 2"/>
</dbReference>
<dbReference type="MEROPS" id="I04.958"/>
<dbReference type="GlyCosmos" id="O73860">
    <property type="glycosylation" value="3 sites, No reported glycans"/>
</dbReference>
<dbReference type="iPTMnet" id="O73860"/>
<dbReference type="GeneID" id="100303699"/>
<dbReference type="KEGG" id="mgp:100303699"/>
<dbReference type="CTD" id="569051"/>
<dbReference type="InParanoid" id="O73860"/>
<dbReference type="OrthoDB" id="671595at2759"/>
<dbReference type="PRO" id="PR:O73860"/>
<dbReference type="Proteomes" id="UP000001645">
    <property type="component" value="Unplaced"/>
</dbReference>
<dbReference type="GO" id="GO:0005615">
    <property type="term" value="C:extracellular space"/>
    <property type="evidence" value="ECO:0007669"/>
    <property type="project" value="InterPro"/>
</dbReference>
<dbReference type="GO" id="GO:0004867">
    <property type="term" value="F:serine-type endopeptidase inhibitor activity"/>
    <property type="evidence" value="ECO:0007669"/>
    <property type="project" value="InterPro"/>
</dbReference>
<dbReference type="CDD" id="cd02059">
    <property type="entry name" value="serpinB14_OVA"/>
    <property type="match status" value="1"/>
</dbReference>
<dbReference type="FunFam" id="2.30.39.10:FF:000001">
    <property type="entry name" value="Serpin family B member 2"/>
    <property type="match status" value="1"/>
</dbReference>
<dbReference type="Gene3D" id="2.30.39.10">
    <property type="entry name" value="Alpha-1-antitrypsin, domain 1"/>
    <property type="match status" value="1"/>
</dbReference>
<dbReference type="Gene3D" id="3.30.497.10">
    <property type="entry name" value="Antithrombin, subunit I, domain 2"/>
    <property type="match status" value="1"/>
</dbReference>
<dbReference type="InterPro" id="IPR023795">
    <property type="entry name" value="Serpin_CS"/>
</dbReference>
<dbReference type="InterPro" id="IPR023796">
    <property type="entry name" value="Serpin_dom"/>
</dbReference>
<dbReference type="InterPro" id="IPR000215">
    <property type="entry name" value="Serpin_fam"/>
</dbReference>
<dbReference type="InterPro" id="IPR036186">
    <property type="entry name" value="Serpin_sf"/>
</dbReference>
<dbReference type="InterPro" id="IPR042178">
    <property type="entry name" value="Serpin_sf_1"/>
</dbReference>
<dbReference type="InterPro" id="IPR042185">
    <property type="entry name" value="Serpin_sf_2"/>
</dbReference>
<dbReference type="PANTHER" id="PTHR11461">
    <property type="entry name" value="SERINE PROTEASE INHIBITOR, SERPIN"/>
    <property type="match status" value="1"/>
</dbReference>
<dbReference type="PANTHER" id="PTHR11461:SF186">
    <property type="entry name" value="SERPIN B4"/>
    <property type="match status" value="1"/>
</dbReference>
<dbReference type="Pfam" id="PF00079">
    <property type="entry name" value="Serpin"/>
    <property type="match status" value="1"/>
</dbReference>
<dbReference type="SMART" id="SM00093">
    <property type="entry name" value="SERPIN"/>
    <property type="match status" value="1"/>
</dbReference>
<dbReference type="SUPFAM" id="SSF56574">
    <property type="entry name" value="Serpins"/>
    <property type="match status" value="1"/>
</dbReference>
<dbReference type="PROSITE" id="PS00284">
    <property type="entry name" value="SERPIN"/>
    <property type="match status" value="1"/>
</dbReference>
<name>OVAL_MELGA</name>
<comment type="function">
    <text evidence="1">Storage protein of egg white. Lack protease inhibitory activity (By similarity).</text>
</comment>
<comment type="subcellular location">
    <subcellularLocation>
        <location evidence="1">Secreted</location>
    </subcellularLocation>
</comment>
<comment type="tissue specificity">
    <text>Major protein of egg white.</text>
</comment>
<comment type="PTM">
    <text evidence="1">The signal sequence is not cleaved. The functional signal for membrane translocation of ovalbumin becomes accessible when the nascent chain is 50 to 60 residues long. The hydrophobic sequence which lies between residues 27 and 43 folds back on the preceding residues to form an amphipathic hairpin structure which is the signal element recognized by the membrane (By similarity).</text>
</comment>
<comment type="similarity">
    <text evidence="4">Belongs to the serpin family. Ov-serpin subfamily.</text>
</comment>
<sequence length="386" mass="42988">MGSIGAVSMEFCFDVFKELKVHHANENIFYSPFTIISALAMVYLGAKDSTRTQINKVVRFDKLPGFGDSVEAQCGTSVNVHSSLRDILNQITKPNDVYSFSLASRLYAEETYPILPEYLQCVKELYRGGLESINFQTAADQARGLINSWVESQTNGMIKNVLQPSSVDSQTAMVLVNAIVFKGLWEKAFKDEDTQAIPFRVTEQESKPVQMMYQIGLFKVASMASEKMKILELPFASGTMSMWVLLPDEVSGLEQLETTISFEKMTEWISSNIMEERRIKVYLPRMKMEEKYNLTSVLMAMGITDLFSSSANLSGISSAGSLKISQAAHAAYAEIYEAGREVIGSAEAGADATSVSEEFRVDHPFLYCIKHNLTNSILFFGRCISP</sequence>
<feature type="initiator methionine" description="Removed" evidence="1">
    <location>
        <position position="1"/>
    </location>
</feature>
<feature type="chain" id="PRO_0000094129" description="Ovalbumin">
    <location>
        <begin position="2"/>
        <end position="386"/>
    </location>
</feature>
<feature type="signal peptide" description="Not cleaved" evidence="1">
    <location>
        <begin position="22"/>
        <end position="48"/>
    </location>
</feature>
<feature type="site" description="Reactive bond homolog" evidence="1">
    <location>
        <begin position="353"/>
        <end position="354"/>
    </location>
</feature>
<feature type="modified residue" description="N-acetylglycine" evidence="1">
    <location>
        <position position="2"/>
    </location>
</feature>
<feature type="modified residue" description="Phosphoserine" evidence="3">
    <location>
        <position position="69"/>
    </location>
</feature>
<feature type="modified residue" description="Phosphoserine" evidence="3">
    <location>
        <position position="345"/>
    </location>
</feature>
<feature type="glycosylation site" description="N-linked (GlcNAc...) asparagine" evidence="2">
    <location>
        <position position="293"/>
    </location>
</feature>
<feature type="glycosylation site" description="N-linked (GlcNAc...) asparagine" evidence="2">
    <location>
        <position position="312"/>
    </location>
</feature>
<feature type="glycosylation site" description="N-linked (GlcNAc...) asparagine" evidence="2">
    <location>
        <position position="372"/>
    </location>
</feature>
<feature type="disulfide bond" evidence="1">
    <location>
        <begin position="74"/>
        <end position="121"/>
    </location>
</feature>
<protein>
    <recommendedName>
        <fullName>Ovalbumin</fullName>
    </recommendedName>
    <alternativeName>
        <fullName>Egg albumin</fullName>
    </alternativeName>
</protein>
<gene>
    <name type="primary">SERPINB14</name>
</gene>
<accession>O73860</accession>
<organism>
    <name type="scientific">Meleagris gallopavo</name>
    <name type="common">Wild turkey</name>
    <dbReference type="NCBI Taxonomy" id="9103"/>
    <lineage>
        <taxon>Eukaryota</taxon>
        <taxon>Metazoa</taxon>
        <taxon>Chordata</taxon>
        <taxon>Craniata</taxon>
        <taxon>Vertebrata</taxon>
        <taxon>Euteleostomi</taxon>
        <taxon>Archelosauria</taxon>
        <taxon>Archosauria</taxon>
        <taxon>Dinosauria</taxon>
        <taxon>Saurischia</taxon>
        <taxon>Theropoda</taxon>
        <taxon>Coelurosauria</taxon>
        <taxon>Aves</taxon>
        <taxon>Neognathae</taxon>
        <taxon>Galloanserae</taxon>
        <taxon>Galliformes</taxon>
        <taxon>Phasianidae</taxon>
        <taxon>Meleagridinae</taxon>
        <taxon>Meleagris</taxon>
    </lineage>
</organism>
<proteinExistence type="evidence at protein level"/>